<evidence type="ECO:0000250" key="1"/>
<evidence type="ECO:0000255" key="2"/>
<evidence type="ECO:0000305" key="3"/>
<dbReference type="EC" id="1.7.2.4"/>
<dbReference type="EMBL" id="X65278">
    <property type="protein sequence ID" value="CAA46383.1"/>
    <property type="molecule type" value="Genomic_DNA"/>
</dbReference>
<dbReference type="EMBL" id="AY305378">
    <property type="protein sequence ID" value="AAP86001.1"/>
    <property type="molecule type" value="Genomic_DNA"/>
</dbReference>
<dbReference type="PIR" id="S24382">
    <property type="entry name" value="S24382"/>
</dbReference>
<dbReference type="RefSeq" id="WP_011154164.1">
    <property type="nucleotide sequence ID" value="NC_005241.1"/>
</dbReference>
<dbReference type="SMR" id="Q59105"/>
<dbReference type="KEGG" id="reh:PHG252"/>
<dbReference type="PATRIC" id="fig|381666.6.peg.200"/>
<dbReference type="eggNOG" id="COG4263">
    <property type="taxonomic scope" value="Bacteria"/>
</dbReference>
<dbReference type="HOGENOM" id="CLU_016420_0_0_4"/>
<dbReference type="OrthoDB" id="9759695at2"/>
<dbReference type="BioCyc" id="MetaCyc:MONOMER-20927"/>
<dbReference type="UniPathway" id="UPA00652">
    <property type="reaction ID" value="UER00709"/>
</dbReference>
<dbReference type="Proteomes" id="UP000008210">
    <property type="component" value="Plasmid megaplasmid pHG1"/>
</dbReference>
<dbReference type="GO" id="GO:0016020">
    <property type="term" value="C:membrane"/>
    <property type="evidence" value="ECO:0007669"/>
    <property type="project" value="InterPro"/>
</dbReference>
<dbReference type="GO" id="GO:0042597">
    <property type="term" value="C:periplasmic space"/>
    <property type="evidence" value="ECO:0007669"/>
    <property type="project" value="UniProtKB-SubCell"/>
</dbReference>
<dbReference type="GO" id="GO:0005509">
    <property type="term" value="F:calcium ion binding"/>
    <property type="evidence" value="ECO:0007669"/>
    <property type="project" value="UniProtKB-UniRule"/>
</dbReference>
<dbReference type="GO" id="GO:0005507">
    <property type="term" value="F:copper ion binding"/>
    <property type="evidence" value="ECO:0007669"/>
    <property type="project" value="UniProtKB-UniRule"/>
</dbReference>
<dbReference type="GO" id="GO:0004129">
    <property type="term" value="F:cytochrome-c oxidase activity"/>
    <property type="evidence" value="ECO:0007669"/>
    <property type="project" value="InterPro"/>
</dbReference>
<dbReference type="GO" id="GO:0050304">
    <property type="term" value="F:nitrous-oxide reductase activity"/>
    <property type="evidence" value="ECO:0007669"/>
    <property type="project" value="UniProtKB-UniRule"/>
</dbReference>
<dbReference type="GO" id="GO:0019333">
    <property type="term" value="P:denitrification pathway"/>
    <property type="evidence" value="ECO:0007669"/>
    <property type="project" value="UniProtKB-UniPathway"/>
</dbReference>
<dbReference type="CDD" id="cd04223">
    <property type="entry name" value="N2OR_C"/>
    <property type="match status" value="1"/>
</dbReference>
<dbReference type="Gene3D" id="2.60.40.420">
    <property type="entry name" value="Cupredoxins - blue copper proteins"/>
    <property type="match status" value="1"/>
</dbReference>
<dbReference type="Gene3D" id="2.130.10.10">
    <property type="entry name" value="YVTN repeat-like/Quinoprotein amine dehydrogenase"/>
    <property type="match status" value="1"/>
</dbReference>
<dbReference type="HAMAP" id="MF_00716">
    <property type="entry name" value="NosZ"/>
    <property type="match status" value="1"/>
</dbReference>
<dbReference type="InterPro" id="IPR002429">
    <property type="entry name" value="CcO_II-like_C"/>
</dbReference>
<dbReference type="InterPro" id="IPR008972">
    <property type="entry name" value="Cupredoxin"/>
</dbReference>
<dbReference type="InterPro" id="IPR028096">
    <property type="entry name" value="EfeO_Cupredoxin"/>
</dbReference>
<dbReference type="InterPro" id="IPR011045">
    <property type="entry name" value="N2O_reductase_N"/>
</dbReference>
<dbReference type="InterPro" id="IPR034205">
    <property type="entry name" value="N2OR_C"/>
</dbReference>
<dbReference type="InterPro" id="IPR023644">
    <property type="entry name" value="NO_Rdtase"/>
</dbReference>
<dbReference type="InterPro" id="IPR041114">
    <property type="entry name" value="Nos_propeller"/>
</dbReference>
<dbReference type="InterPro" id="IPR041142">
    <property type="entry name" value="NOS_propeller_2"/>
</dbReference>
<dbReference type="InterPro" id="IPR051403">
    <property type="entry name" value="NosZ/Cyto_c_oxidase_sub2"/>
</dbReference>
<dbReference type="InterPro" id="IPR006311">
    <property type="entry name" value="TAT_signal"/>
</dbReference>
<dbReference type="InterPro" id="IPR015943">
    <property type="entry name" value="WD40/YVTN_repeat-like_dom_sf"/>
</dbReference>
<dbReference type="NCBIfam" id="TIGR04244">
    <property type="entry name" value="nitrous_NosZ_RR"/>
    <property type="match status" value="1"/>
</dbReference>
<dbReference type="PANTHER" id="PTHR42838">
    <property type="entry name" value="CYTOCHROME C OXIDASE SUBUNIT II"/>
    <property type="match status" value="1"/>
</dbReference>
<dbReference type="PANTHER" id="PTHR42838:SF2">
    <property type="entry name" value="NITROUS-OXIDE REDUCTASE"/>
    <property type="match status" value="1"/>
</dbReference>
<dbReference type="Pfam" id="PF13473">
    <property type="entry name" value="Cupredoxin_1"/>
    <property type="match status" value="1"/>
</dbReference>
<dbReference type="Pfam" id="PF18764">
    <property type="entry name" value="nos_propeller"/>
    <property type="match status" value="1"/>
</dbReference>
<dbReference type="Pfam" id="PF18793">
    <property type="entry name" value="nos_propeller_2"/>
    <property type="match status" value="1"/>
</dbReference>
<dbReference type="SUPFAM" id="SSF49503">
    <property type="entry name" value="Cupredoxins"/>
    <property type="match status" value="1"/>
</dbReference>
<dbReference type="SUPFAM" id="SSF50974">
    <property type="entry name" value="Nitrous oxide reductase, N-terminal domain"/>
    <property type="match status" value="1"/>
</dbReference>
<dbReference type="PROSITE" id="PS50857">
    <property type="entry name" value="COX2_CUA"/>
    <property type="match status" value="1"/>
</dbReference>
<dbReference type="PROSITE" id="PS51318">
    <property type="entry name" value="TAT"/>
    <property type="match status" value="1"/>
</dbReference>
<name>NOSZ_CUPNH</name>
<gene>
    <name type="primary">nosZ</name>
    <name type="ordered locus">PHG252</name>
</gene>
<comment type="function">
    <text>Nitrous-oxide reductase is part of a bacterial respiratory system which is activated under anaerobic conditions in the presence of nitrate or nitrous oxide.</text>
</comment>
<comment type="catalytic activity">
    <reaction>
        <text>N2 + 2 Fe(III)-[cytochrome c] + H2O = nitrous oxide + 2 Fe(II)-[cytochrome c] + 2 H(+)</text>
        <dbReference type="Rhea" id="RHEA:43108"/>
        <dbReference type="Rhea" id="RHEA-COMP:10350"/>
        <dbReference type="Rhea" id="RHEA-COMP:14399"/>
        <dbReference type="ChEBI" id="CHEBI:15377"/>
        <dbReference type="ChEBI" id="CHEBI:15378"/>
        <dbReference type="ChEBI" id="CHEBI:17045"/>
        <dbReference type="ChEBI" id="CHEBI:17997"/>
        <dbReference type="ChEBI" id="CHEBI:29033"/>
        <dbReference type="ChEBI" id="CHEBI:29034"/>
        <dbReference type="EC" id="1.7.2.4"/>
    </reaction>
</comment>
<comment type="cofactor">
    <cofactor evidence="1">
        <name>Ca(2+)</name>
        <dbReference type="ChEBI" id="CHEBI:29108"/>
    </cofactor>
    <text evidence="1">Binds 2 calcium ions per subunit.</text>
</comment>
<comment type="cofactor">
    <cofactor evidence="1">
        <name>Cu cation</name>
        <dbReference type="ChEBI" id="CHEBI:23378"/>
    </cofactor>
    <text evidence="1">Binds 6 Cu cations per subunit. Each subunit contains 2 copper centers; Cu(A) (binuclear) and Cu(Z) (tetranuclear). Cu(Z) is thought to be the site of nitrous oxide reduction.</text>
</comment>
<comment type="pathway">
    <text>Nitrogen metabolism; nitrate reduction (denitrification); dinitrogen from nitrate: step 4/4.</text>
</comment>
<comment type="subunit">
    <text evidence="1">Homodimer.</text>
</comment>
<comment type="subcellular location">
    <subcellularLocation>
        <location evidence="1">Periplasm</location>
    </subcellularLocation>
</comment>
<comment type="PTM">
    <text>Predicted to be exported by the Tat system. The position of the signal peptide cleavage has not been experimentally proven.</text>
</comment>
<comment type="similarity">
    <text evidence="3">Belongs to the NosZ family.</text>
</comment>
<comment type="similarity">
    <text evidence="3">In the C-terminal section; belongs to the cytochrome c oxidase subunit 2 family.</text>
</comment>
<reference key="1">
    <citation type="journal article" date="1992" name="Eur. J. Biochem.">
        <title>Derived amino acid sequences of the nosZ gene (respiratory N2O reductase) from Alcaligenes eutrophus, Pseudomonas aeruginosa and Pseudomonas stutzeri reveal potential copper-binding residues. Implications for the CuA site of N2O reductase and cytochrome-c oxidase.</title>
        <authorList>
            <person name="Zumft W.G."/>
            <person name="Dreusch A."/>
            <person name="Loechelt S."/>
            <person name="Cuypers H."/>
            <person name="Friedrich B."/>
            <person name="Schneider B."/>
        </authorList>
    </citation>
    <scope>NUCLEOTIDE SEQUENCE [GENOMIC DNA]</scope>
</reference>
<reference key="2">
    <citation type="journal article" date="2003" name="J. Mol. Biol.">
        <title>Complete nucleotide sequence of pHG1: a Ralstonia eutropha H16 megaplasmid encoding key enzymes of H(2)-based lithoautotrophy and anaerobiosis.</title>
        <authorList>
            <person name="Schwartz E."/>
            <person name="Henne A."/>
            <person name="Cramm R."/>
            <person name="Eitinger T."/>
            <person name="Friedrich B."/>
            <person name="Gottschalk G."/>
        </authorList>
    </citation>
    <scope>NUCLEOTIDE SEQUENCE [LARGE SCALE GENOMIC DNA]</scope>
    <source>
        <strain>ATCC 17699 / DSM 428 / KCTC 22496 / NCIMB 10442 / H16 / Stanier 337</strain>
    </source>
</reference>
<keyword id="KW-0106">Calcium</keyword>
<keyword id="KW-0186">Copper</keyword>
<keyword id="KW-0479">Metal-binding</keyword>
<keyword id="KW-0560">Oxidoreductase</keyword>
<keyword id="KW-0574">Periplasm</keyword>
<keyword id="KW-0614">Plasmid</keyword>
<keyword id="KW-1185">Reference proteome</keyword>
<keyword id="KW-0732">Signal</keyword>
<sequence length="643" mass="70085">MSKEKASIGNGPGGIGRRQFLGTAALAGLAGVVACTDKGAAPAAAAVGAPASGAHGAAHGAGASVHLKPGELDTYYGLWSGGHTGDMRVLGLPSGREILRIPCFVPDALVGWGITNESKKVMGARPDGTLRYTVADTHHTHASYKDGNYDGRYAWVNDKINSRIARIRLDYFICDKITELPNVQGFHGIFPDKRDPVDTKINYTTRVFCGGEFGIPLPSAPTEDAGKYRSLFTCVDAETMAVRWQVLIDGNCDLVATSYDGKLAATNQYNTENGAHFEDMMSAERDACVFFNIARIEAAVQAGKFKTYGDSKVPVVDGTQAANKDPKTALTAYVSVPKNPHGVNASPDQKYFICAGKLSPTATVIELSRVLGWFDGKQEKLDDAIVAEVELGLGPLHTAFDGRGNAYTTLFLDSQLVKWNLDAAIKFHKGDKNAKYVVDRLDLQYQPGHVNASQSETVAADGKYLAVGCKFSKDRFLPVGPLHPENEQLIDISGQKMVLMADHPVRGEPHDFIIFKRELVRPKQVYALDDFPLAIKDPKESGVFRNGRKVTVKITSQAPAFSLREFKLKKGDEVTLILTNLDKIEDLTHGFAIPKYNVNFIVNPQETASVTFVADKPGVFWCYCTHFCHALHLEMRTRMIVEA</sequence>
<feature type="signal peptide" description="Tat-type signal" evidence="2">
    <location>
        <begin position="1"/>
        <end position="46"/>
    </location>
</feature>
<feature type="chain" id="PRO_0000019823" description="Nitrous-oxide reductase">
    <location>
        <begin position="47"/>
        <end position="643"/>
    </location>
</feature>
<feature type="region of interest" description="COX2-like">
    <location>
        <begin position="548"/>
        <end position="643"/>
    </location>
</feature>
<feature type="binding site" evidence="1">
    <location>
        <position position="138"/>
    </location>
    <ligand>
        <name>Cu cation</name>
        <dbReference type="ChEBI" id="CHEBI:23378"/>
        <label>Z2</label>
    </ligand>
</feature>
<feature type="binding site" evidence="1">
    <location>
        <position position="139"/>
    </location>
    <ligand>
        <name>Cu cation</name>
        <dbReference type="ChEBI" id="CHEBI:23378"/>
        <label>Z3</label>
    </ligand>
</feature>
<feature type="binding site" evidence="1">
    <location>
        <position position="187"/>
    </location>
    <ligand>
        <name>Cu cation</name>
        <dbReference type="ChEBI" id="CHEBI:23378"/>
        <label>Z2</label>
    </ligand>
</feature>
<feature type="binding site" evidence="1">
    <location>
        <position position="269"/>
    </location>
    <ligand>
        <name>Ca(2+)</name>
        <dbReference type="ChEBI" id="CHEBI:29108"/>
        <label>2</label>
    </ligand>
</feature>
<feature type="binding site" evidence="1">
    <location>
        <position position="272"/>
    </location>
    <ligand>
        <name>Ca(2+)</name>
        <dbReference type="ChEBI" id="CHEBI:29108"/>
        <label>2</label>
    </ligand>
</feature>
<feature type="binding site" evidence="1">
    <location>
        <position position="280"/>
    </location>
    <ligand>
        <name>Ca(2+)</name>
        <dbReference type="ChEBI" id="CHEBI:29108"/>
        <label>2</label>
    </ligand>
</feature>
<feature type="binding site" evidence="1">
    <location>
        <position position="286"/>
    </location>
    <ligand>
        <name>Ca(2+)</name>
        <dbReference type="ChEBI" id="CHEBI:29108"/>
        <label>2</label>
    </ligand>
</feature>
<feature type="binding site" evidence="1">
    <location>
        <position position="339"/>
    </location>
    <ligand>
        <name>Ca(2+)</name>
        <dbReference type="ChEBI" id="CHEBI:29108"/>
        <label>2</label>
    </ligand>
</feature>
<feature type="binding site" evidence="1">
    <location>
        <position position="341"/>
    </location>
    <ligand>
        <name>Cu cation</name>
        <dbReference type="ChEBI" id="CHEBI:23378"/>
        <label>Z1</label>
    </ligand>
</feature>
<feature type="binding site" evidence="1">
    <location>
        <position position="397"/>
    </location>
    <ligand>
        <name>Cu cation</name>
        <dbReference type="ChEBI" id="CHEBI:23378"/>
        <label>Z1</label>
    </ligand>
</feature>
<feature type="binding site" evidence="1">
    <location>
        <position position="449"/>
    </location>
    <ligand>
        <name>Cu cation</name>
        <dbReference type="ChEBI" id="CHEBI:23378"/>
        <label>Z3</label>
    </ligand>
</feature>
<feature type="binding site" evidence="1">
    <location>
        <position position="470"/>
    </location>
    <ligand>
        <name>Ca(2+)</name>
        <dbReference type="ChEBI" id="CHEBI:29108"/>
        <label>1</label>
    </ligand>
</feature>
<feature type="binding site" evidence="1">
    <location>
        <position position="485"/>
    </location>
    <ligand>
        <name>Ca(2+)</name>
        <dbReference type="ChEBI" id="CHEBI:29108"/>
        <label>1</label>
    </ligand>
</feature>
<feature type="binding site" evidence="1">
    <location>
        <position position="510"/>
    </location>
    <ligand>
        <name>Cu cation</name>
        <dbReference type="ChEBI" id="CHEBI:23378"/>
        <label>Z4</label>
    </ligand>
</feature>
<feature type="binding site" evidence="1">
    <location>
        <position position="589"/>
    </location>
    <ligand>
        <name>Cu cation</name>
        <dbReference type="ChEBI" id="CHEBI:23378"/>
        <label>A1</label>
    </ligand>
</feature>
<feature type="binding site" evidence="1">
    <location>
        <position position="624"/>
    </location>
    <ligand>
        <name>Cu cation</name>
        <dbReference type="ChEBI" id="CHEBI:23378"/>
        <label>A1</label>
    </ligand>
</feature>
<feature type="binding site" evidence="1">
    <location>
        <position position="624"/>
    </location>
    <ligand>
        <name>Cu cation</name>
        <dbReference type="ChEBI" id="CHEBI:23378"/>
        <label>A2</label>
    </ligand>
</feature>
<feature type="binding site" evidence="1">
    <location>
        <position position="626"/>
    </location>
    <ligand>
        <name>Cu cation</name>
        <dbReference type="ChEBI" id="CHEBI:23378"/>
        <label>A2</label>
    </ligand>
</feature>
<feature type="binding site" evidence="1">
    <location>
        <position position="628"/>
    </location>
    <ligand>
        <name>Cu cation</name>
        <dbReference type="ChEBI" id="CHEBI:23378"/>
        <label>A1</label>
    </ligand>
</feature>
<feature type="binding site" evidence="1">
    <location>
        <position position="628"/>
    </location>
    <ligand>
        <name>Cu cation</name>
        <dbReference type="ChEBI" id="CHEBI:23378"/>
        <label>A2</label>
    </ligand>
</feature>
<feature type="binding site" evidence="1">
    <location>
        <position position="632"/>
    </location>
    <ligand>
        <name>Cu cation</name>
        <dbReference type="ChEBI" id="CHEBI:23378"/>
        <label>A2</label>
    </ligand>
</feature>
<feature type="binding site" evidence="1">
    <location>
        <position position="635"/>
    </location>
    <ligand>
        <name>Cu cation</name>
        <dbReference type="ChEBI" id="CHEBI:23378"/>
        <label>A1</label>
    </ligand>
</feature>
<accession>Q59105</accession>
<geneLocation type="plasmid">
    <name>megaplasmid pHG1</name>
</geneLocation>
<protein>
    <recommendedName>
        <fullName>Nitrous-oxide reductase</fullName>
        <ecNumber>1.7.2.4</ecNumber>
    </recommendedName>
    <alternativeName>
        <fullName>N(2)OR</fullName>
    </alternativeName>
    <alternativeName>
        <fullName>N2O reductase</fullName>
    </alternativeName>
</protein>
<proteinExistence type="inferred from homology"/>
<organism>
    <name type="scientific">Cupriavidus necator (strain ATCC 17699 / DSM 428 / KCTC 22496 / NCIMB 10442 / H16 / Stanier 337)</name>
    <name type="common">Ralstonia eutropha</name>
    <dbReference type="NCBI Taxonomy" id="381666"/>
    <lineage>
        <taxon>Bacteria</taxon>
        <taxon>Pseudomonadati</taxon>
        <taxon>Pseudomonadota</taxon>
        <taxon>Betaproteobacteria</taxon>
        <taxon>Burkholderiales</taxon>
        <taxon>Burkholderiaceae</taxon>
        <taxon>Cupriavidus</taxon>
    </lineage>
</organism>